<dbReference type="EMBL" id="BC102849">
    <property type="protein sequence ID" value="AAI02850.1"/>
    <property type="molecule type" value="mRNA"/>
</dbReference>
<dbReference type="RefSeq" id="NP_001029476.1">
    <property type="nucleotide sequence ID" value="NM_001034304.2"/>
</dbReference>
<dbReference type="RefSeq" id="XP_005207181.1">
    <property type="nucleotide sequence ID" value="XM_005207124.3"/>
</dbReference>
<dbReference type="RefSeq" id="XP_010803875.1">
    <property type="nucleotide sequence ID" value="XM_010805573.4"/>
</dbReference>
<dbReference type="RefSeq" id="XP_010803876.1">
    <property type="nucleotide sequence ID" value="XM_010805574.4"/>
</dbReference>
<dbReference type="RefSeq" id="XP_024847283.1">
    <property type="nucleotide sequence ID" value="XM_024991515.2"/>
</dbReference>
<dbReference type="RefSeq" id="XP_024847284.1">
    <property type="nucleotide sequence ID" value="XM_024991516.2"/>
</dbReference>
<dbReference type="RefSeq" id="XP_024847285.1">
    <property type="nucleotide sequence ID" value="XM_024991517.2"/>
</dbReference>
<dbReference type="SMR" id="Q3ZC80"/>
<dbReference type="FunCoup" id="Q3ZC80">
    <property type="interactions" value="314"/>
</dbReference>
<dbReference type="STRING" id="9913.ENSBTAP00000005968"/>
<dbReference type="GlyCosmos" id="Q3ZC80">
    <property type="glycosylation" value="2 sites, No reported glycans"/>
</dbReference>
<dbReference type="GlyGen" id="Q3ZC80">
    <property type="glycosylation" value="2 sites"/>
</dbReference>
<dbReference type="PaxDb" id="9913-ENSBTAP00000005968"/>
<dbReference type="Ensembl" id="ENSBTAT00000005968.7">
    <property type="protein sequence ID" value="ENSBTAP00000005968.5"/>
    <property type="gene ID" value="ENSBTAG00000004541.7"/>
</dbReference>
<dbReference type="Ensembl" id="ENSBTAT00000117997.1">
    <property type="protein sequence ID" value="ENSBTAP00000088616.1"/>
    <property type="gene ID" value="ENSBTAG00000004541.7"/>
</dbReference>
<dbReference type="Ensembl" id="ENSBTAT00000119896.1">
    <property type="protein sequence ID" value="ENSBTAP00000089293.1"/>
    <property type="gene ID" value="ENSBTAG00000004541.7"/>
</dbReference>
<dbReference type="Ensembl" id="ENSBTAT00000126979.1">
    <property type="protein sequence ID" value="ENSBTAP00000082506.1"/>
    <property type="gene ID" value="ENSBTAG00000004541.7"/>
</dbReference>
<dbReference type="Ensembl" id="ENSBTAT00000127755.1">
    <property type="protein sequence ID" value="ENSBTAP00000081346.1"/>
    <property type="gene ID" value="ENSBTAG00000004541.7"/>
</dbReference>
<dbReference type="GeneID" id="507598"/>
<dbReference type="KEGG" id="bta:507598"/>
<dbReference type="CTD" id="57121"/>
<dbReference type="VEuPathDB" id="HostDB:ENSBTAG00000004541"/>
<dbReference type="VGNC" id="VGNC:30959">
    <property type="gene designation" value="LPAR5"/>
</dbReference>
<dbReference type="eggNOG" id="ENOG502QUH0">
    <property type="taxonomic scope" value="Eukaryota"/>
</dbReference>
<dbReference type="GeneTree" id="ENSGT00950000183136"/>
<dbReference type="HOGENOM" id="CLU_009579_8_2_1"/>
<dbReference type="InParanoid" id="Q3ZC80"/>
<dbReference type="OMA" id="QTCKDYT"/>
<dbReference type="OrthoDB" id="5781782at2759"/>
<dbReference type="TreeFam" id="TF350009"/>
<dbReference type="Reactome" id="R-BTA-416476">
    <property type="pathway name" value="G alpha (q) signalling events"/>
</dbReference>
<dbReference type="Reactome" id="R-BTA-418594">
    <property type="pathway name" value="G alpha (i) signalling events"/>
</dbReference>
<dbReference type="Reactome" id="R-BTA-419408">
    <property type="pathway name" value="Lysosphingolipid and LPA receptors"/>
</dbReference>
<dbReference type="Proteomes" id="UP000009136">
    <property type="component" value="Chromosome 5"/>
</dbReference>
<dbReference type="Bgee" id="ENSBTAG00000004541">
    <property type="expression patterns" value="Expressed in esophagus and 83 other cell types or tissues"/>
</dbReference>
<dbReference type="GO" id="GO:0005886">
    <property type="term" value="C:plasma membrane"/>
    <property type="evidence" value="ECO:0007669"/>
    <property type="project" value="UniProtKB-SubCell"/>
</dbReference>
<dbReference type="GO" id="GO:0004930">
    <property type="term" value="F:G protein-coupled receptor activity"/>
    <property type="evidence" value="ECO:0007669"/>
    <property type="project" value="UniProtKB-KW"/>
</dbReference>
<dbReference type="GO" id="GO:0048266">
    <property type="term" value="P:behavioral response to pain"/>
    <property type="evidence" value="ECO:0000318"/>
    <property type="project" value="GO_Central"/>
</dbReference>
<dbReference type="FunFam" id="1.20.1070.10:FF:000017">
    <property type="entry name" value="lysophosphatidic acid receptor 4"/>
    <property type="match status" value="1"/>
</dbReference>
<dbReference type="Gene3D" id="1.20.1070.10">
    <property type="entry name" value="Rhodopsin 7-helix transmembrane proteins"/>
    <property type="match status" value="1"/>
</dbReference>
<dbReference type="InterPro" id="IPR000276">
    <property type="entry name" value="GPCR_Rhodpsn"/>
</dbReference>
<dbReference type="InterPro" id="IPR017452">
    <property type="entry name" value="GPCR_Rhodpsn_7TM"/>
</dbReference>
<dbReference type="PANTHER" id="PTHR24234:SF6">
    <property type="entry name" value="LYSOPHOSPHATIDIC ACID RECEPTOR 5"/>
    <property type="match status" value="1"/>
</dbReference>
<dbReference type="PANTHER" id="PTHR24234">
    <property type="entry name" value="LYSOPHOSPHATIDIC ACID RECEPTOR 5/SPHINGOSYLPHOSPHORYLCHOLINE RECEPTOR"/>
    <property type="match status" value="1"/>
</dbReference>
<dbReference type="Pfam" id="PF00001">
    <property type="entry name" value="7tm_1"/>
    <property type="match status" value="1"/>
</dbReference>
<dbReference type="PRINTS" id="PR00237">
    <property type="entry name" value="GPCRRHODOPSN"/>
</dbReference>
<dbReference type="PRINTS" id="PR01157">
    <property type="entry name" value="P2YPURNOCPTR"/>
</dbReference>
<dbReference type="SUPFAM" id="SSF81321">
    <property type="entry name" value="Family A G protein-coupled receptor-like"/>
    <property type="match status" value="1"/>
</dbReference>
<dbReference type="PROSITE" id="PS00237">
    <property type="entry name" value="G_PROTEIN_RECEP_F1_1"/>
    <property type="match status" value="1"/>
</dbReference>
<dbReference type="PROSITE" id="PS50262">
    <property type="entry name" value="G_PROTEIN_RECEP_F1_2"/>
    <property type="match status" value="1"/>
</dbReference>
<keyword id="KW-1003">Cell membrane</keyword>
<keyword id="KW-1015">Disulfide bond</keyword>
<keyword id="KW-0297">G-protein coupled receptor</keyword>
<keyword id="KW-0325">Glycoprotein</keyword>
<keyword id="KW-0472">Membrane</keyword>
<keyword id="KW-0675">Receptor</keyword>
<keyword id="KW-1185">Reference proteome</keyword>
<keyword id="KW-0807">Transducer</keyword>
<keyword id="KW-0812">Transmembrane</keyword>
<keyword id="KW-1133">Transmembrane helix</keyword>
<organism>
    <name type="scientific">Bos taurus</name>
    <name type="common">Bovine</name>
    <dbReference type="NCBI Taxonomy" id="9913"/>
    <lineage>
        <taxon>Eukaryota</taxon>
        <taxon>Metazoa</taxon>
        <taxon>Chordata</taxon>
        <taxon>Craniata</taxon>
        <taxon>Vertebrata</taxon>
        <taxon>Euteleostomi</taxon>
        <taxon>Mammalia</taxon>
        <taxon>Eutheria</taxon>
        <taxon>Laurasiatheria</taxon>
        <taxon>Artiodactyla</taxon>
        <taxon>Ruminantia</taxon>
        <taxon>Pecora</taxon>
        <taxon>Bovidae</taxon>
        <taxon>Bovinae</taxon>
        <taxon>Bos</taxon>
    </lineage>
</organism>
<proteinExistence type="evidence at transcript level"/>
<name>LPAR5_BOVIN</name>
<evidence type="ECO:0000250" key="1"/>
<evidence type="ECO:0000255" key="2"/>
<evidence type="ECO:0000255" key="3">
    <source>
        <dbReference type="PROSITE-ProRule" id="PRU00521"/>
    </source>
</evidence>
<evidence type="ECO:0000256" key="4">
    <source>
        <dbReference type="SAM" id="MobiDB-lite"/>
    </source>
</evidence>
<feature type="chain" id="PRO_0000245015" description="Lysophosphatidic acid receptor 5">
    <location>
        <begin position="1"/>
        <end position="367"/>
    </location>
</feature>
<feature type="topological domain" description="Extracellular" evidence="2">
    <location>
        <begin position="1"/>
        <end position="25"/>
    </location>
</feature>
<feature type="transmembrane region" description="Helical; Name=1" evidence="2">
    <location>
        <begin position="26"/>
        <end position="46"/>
    </location>
</feature>
<feature type="topological domain" description="Cytoplasmic" evidence="2">
    <location>
        <begin position="47"/>
        <end position="54"/>
    </location>
</feature>
<feature type="transmembrane region" description="Helical; Name=2" evidence="2">
    <location>
        <begin position="55"/>
        <end position="75"/>
    </location>
</feature>
<feature type="topological domain" description="Extracellular" evidence="2">
    <location>
        <begin position="76"/>
        <end position="95"/>
    </location>
</feature>
<feature type="transmembrane region" description="Helical; Name=3" evidence="2">
    <location>
        <begin position="96"/>
        <end position="116"/>
    </location>
</feature>
<feature type="topological domain" description="Cytoplasmic" evidence="2">
    <location>
        <begin position="117"/>
        <end position="135"/>
    </location>
</feature>
<feature type="transmembrane region" description="Helical; Name=4" evidence="2">
    <location>
        <begin position="136"/>
        <end position="156"/>
    </location>
</feature>
<feature type="topological domain" description="Extracellular" evidence="2">
    <location>
        <begin position="157"/>
        <end position="186"/>
    </location>
</feature>
<feature type="transmembrane region" description="Helical; Name=5" evidence="2">
    <location>
        <begin position="187"/>
        <end position="207"/>
    </location>
</feature>
<feature type="topological domain" description="Cytoplasmic" evidence="2">
    <location>
        <begin position="208"/>
        <end position="238"/>
    </location>
</feature>
<feature type="transmembrane region" description="Helical; Name=6" evidence="2">
    <location>
        <begin position="239"/>
        <end position="259"/>
    </location>
</feature>
<feature type="topological domain" description="Extracellular" evidence="2">
    <location>
        <begin position="260"/>
        <end position="275"/>
    </location>
</feature>
<feature type="transmembrane region" description="Helical; Name=7" evidence="2">
    <location>
        <begin position="276"/>
        <end position="296"/>
    </location>
</feature>
<feature type="topological domain" description="Cytoplasmic" evidence="2">
    <location>
        <begin position="297"/>
        <end position="367"/>
    </location>
</feature>
<feature type="region of interest" description="Disordered" evidence="4">
    <location>
        <begin position="332"/>
        <end position="367"/>
    </location>
</feature>
<feature type="compositionally biased region" description="Low complexity" evidence="4">
    <location>
        <begin position="332"/>
        <end position="350"/>
    </location>
</feature>
<feature type="compositionally biased region" description="Polar residues" evidence="4">
    <location>
        <begin position="351"/>
        <end position="360"/>
    </location>
</feature>
<feature type="glycosylation site" description="N-linked (GlcNAc...) asparagine" evidence="2">
    <location>
        <position position="4"/>
    </location>
</feature>
<feature type="glycosylation site" description="N-linked (GlcNAc...) asparagine" evidence="2">
    <location>
        <position position="170"/>
    </location>
</feature>
<feature type="disulfide bond" evidence="3">
    <location>
        <begin position="93"/>
        <end position="174"/>
    </location>
</feature>
<reference key="1">
    <citation type="submission" date="2005-08" db="EMBL/GenBank/DDBJ databases">
        <authorList>
            <consortium name="NIH - Mammalian Gene Collection (MGC) project"/>
        </authorList>
    </citation>
    <scope>NUCLEOTIDE SEQUENCE [LARGE SCALE MRNA]</scope>
    <source>
        <strain>Crossbred X Angus</strain>
        <tissue>Ileum</tissue>
    </source>
</reference>
<protein>
    <recommendedName>
        <fullName>Lysophosphatidic acid receptor 5</fullName>
        <shortName>LPA receptor 5</shortName>
        <shortName>LPA-5</shortName>
    </recommendedName>
    <alternativeName>
        <fullName>G-protein coupled receptor 92</fullName>
    </alternativeName>
</protein>
<gene>
    <name type="primary">LPAR5</name>
    <name type="synonym">GPR92</name>
</gene>
<comment type="function">
    <text evidence="1">Receptor for lysophosphatidic acid (LPA), a mediator of diverse cellular activities.</text>
</comment>
<comment type="subcellular location">
    <subcellularLocation>
        <location>Cell membrane</location>
        <topology>Multi-pass membrane protein</topology>
    </subcellularLocation>
</comment>
<comment type="similarity">
    <text evidence="3">Belongs to the G-protein coupled receptor 1 family.</text>
</comment>
<accession>Q3ZC80</accession>
<sequence>MQANSSAKSLPTECPDYQPIHHLHLVVYSVVLAAGLPLNALALWVFLRALRVHSVVSVYMCNLAASDLLFTLSLPLRLSYYARHYWPFPDFLCQLAGAVFQMNMYGSCIFLTLINVDRYAAIVHPLRLRHLRRPRVARLLCLGVWALILVFAVPTILAHQPSSCARDGRNVSLCFESFSDKLWKGSLLPLLLLAEALGFLLPLAAVVYSSGRVFWTLARPDATRSQRRRKTVRLLLASLVIFLLCFVPYNATLAVYGLLRGEVVPASSEARKKVRGVLMVMVLLAGANCVLDPLVYYFSAEGFRNTLRGLRAPLRDRTLAANGAQEALAEPLTETAHASTLTTTSQGQLQPSDPRSSFTPSHEDSSF</sequence>